<sequence>MPQRIELTSEPVRKPRSTESSLLRKIQRACRSTLPEPDLGLNLDVADYINSKQGATPREAVLAIEKLVNNGDTQAAVFALSLLDVLVKNCGYSIHLQISRKEFLNDLVKRFPEQPPLRYSKVQQMILEAIEEWYQTICKHASYKDDLQYINDMHKLLKYKGYTFPKVGSENLAVLRPNDQLRTPSELQEEQERAQAAKLEELLRSGKPDDLKEANKLMKIMAGFKDDTKVAVKQAINNELNKLKRKADLFNEMLTSADEPDLENEAIQELYGDLKSAQPKFKKLIEEERDDDALVSNLSKFNDLVIQLLKRYKSIKGMKEEELNVPDTNEPAKELNLIDFDDDTTANTPSVTSPSKSLQPFDDLLGDFNKVSLSSPKSPQENDTVVDILGDAHSKSSGIDLLDFDSQPGESKTALSAYSNSIVLPNGLLNSSSNSKEITAQSQRHILNQSDHLRIDYELTRESMTKLRLVIFYSNISSDPITNFALLVASPKGTTLSLQPQSGNMLQSNSRDGIKQIASVEGISVNLGKPIKLKWKANYCTKGDSKEESGTTSLPTI</sequence>
<accession>Q06336</accession>
<accession>D6VSY7</accession>
<organism>
    <name type="scientific">Saccharomyces cerevisiae (strain ATCC 204508 / S288c)</name>
    <name type="common">Baker's yeast</name>
    <dbReference type="NCBI Taxonomy" id="559292"/>
    <lineage>
        <taxon>Eukaryota</taxon>
        <taxon>Fungi</taxon>
        <taxon>Dikarya</taxon>
        <taxon>Ascomycota</taxon>
        <taxon>Saccharomycotina</taxon>
        <taxon>Saccharomycetes</taxon>
        <taxon>Saccharomycetales</taxon>
        <taxon>Saccharomycetaceae</taxon>
        <taxon>Saccharomyces</taxon>
    </lineage>
</organism>
<evidence type="ECO:0000255" key="1">
    <source>
        <dbReference type="PROSITE-ProRule" id="PRU00093"/>
    </source>
</evidence>
<evidence type="ECO:0000255" key="2">
    <source>
        <dbReference type="PROSITE-ProRule" id="PRU00218"/>
    </source>
</evidence>
<evidence type="ECO:0000255" key="3">
    <source>
        <dbReference type="PROSITE-ProRule" id="PRU00373"/>
    </source>
</evidence>
<evidence type="ECO:0000269" key="4">
    <source>
    </source>
</evidence>
<evidence type="ECO:0007744" key="5">
    <source>
    </source>
</evidence>
<evidence type="ECO:0007744" key="6">
    <source>
    </source>
</evidence>
<evidence type="ECO:0007744" key="7">
    <source>
    </source>
</evidence>
<evidence type="ECO:0007829" key="8">
    <source>
        <dbReference type="PDB" id="5CN2"/>
    </source>
</evidence>
<keyword id="KW-0002">3D-structure</keyword>
<keyword id="KW-0175">Coiled coil</keyword>
<keyword id="KW-0333">Golgi apparatus</keyword>
<keyword id="KW-0597">Phosphoprotein</keyword>
<keyword id="KW-0653">Protein transport</keyword>
<keyword id="KW-1185">Reference proteome</keyword>
<keyword id="KW-0813">Transport</keyword>
<dbReference type="EMBL" id="U28372">
    <property type="protein sequence ID" value="AAB64793.1"/>
    <property type="molecule type" value="Genomic_DNA"/>
</dbReference>
<dbReference type="EMBL" id="BK006938">
    <property type="protein sequence ID" value="DAA12197.1"/>
    <property type="molecule type" value="Genomic_DNA"/>
</dbReference>
<dbReference type="PIR" id="S61154">
    <property type="entry name" value="S61154"/>
</dbReference>
<dbReference type="RefSeq" id="NP_010645.1">
    <property type="nucleotide sequence ID" value="NM_001180666.1"/>
</dbReference>
<dbReference type="PDB" id="5CN1">
    <property type="method" value="X-ray"/>
    <property type="resolution" value="2.31 A"/>
    <property type="chains" value="A/B/C/D=433-557"/>
</dbReference>
<dbReference type="PDB" id="5CN2">
    <property type="method" value="X-ray"/>
    <property type="resolution" value="2.25 A"/>
    <property type="chains" value="A/B=433-557"/>
</dbReference>
<dbReference type="PDBsum" id="5CN1"/>
<dbReference type="PDBsum" id="5CN2"/>
<dbReference type="SMR" id="Q06336"/>
<dbReference type="BioGRID" id="32414">
    <property type="interactions" value="134"/>
</dbReference>
<dbReference type="FunCoup" id="Q06336">
    <property type="interactions" value="764"/>
</dbReference>
<dbReference type="IntAct" id="Q06336">
    <property type="interactions" value="5"/>
</dbReference>
<dbReference type="MINT" id="Q06336"/>
<dbReference type="STRING" id="4932.YDR358W"/>
<dbReference type="iPTMnet" id="Q06336"/>
<dbReference type="PaxDb" id="4932-YDR358W"/>
<dbReference type="PeptideAtlas" id="Q06336"/>
<dbReference type="TopDownProteomics" id="Q06336"/>
<dbReference type="EnsemblFungi" id="YDR358W_mRNA">
    <property type="protein sequence ID" value="YDR358W"/>
    <property type="gene ID" value="YDR358W"/>
</dbReference>
<dbReference type="GeneID" id="851960"/>
<dbReference type="KEGG" id="sce:YDR358W"/>
<dbReference type="AGR" id="SGD:S000002766"/>
<dbReference type="SGD" id="S000002766">
    <property type="gene designation" value="GGA1"/>
</dbReference>
<dbReference type="VEuPathDB" id="FungiDB:YDR358W"/>
<dbReference type="eggNOG" id="KOG1087">
    <property type="taxonomic scope" value="Eukaryota"/>
</dbReference>
<dbReference type="GeneTree" id="ENSGT00940000176423"/>
<dbReference type="HOGENOM" id="CLU_017092_0_0_1"/>
<dbReference type="InParanoid" id="Q06336"/>
<dbReference type="OMA" id="VEMENWL"/>
<dbReference type="OrthoDB" id="2018246at2759"/>
<dbReference type="BioCyc" id="YEAST:G3O-29909-MONOMER"/>
<dbReference type="BioGRID-ORCS" id="851960">
    <property type="hits" value="7 hits in 10 CRISPR screens"/>
</dbReference>
<dbReference type="PRO" id="PR:Q06336"/>
<dbReference type="Proteomes" id="UP000002311">
    <property type="component" value="Chromosome IV"/>
</dbReference>
<dbReference type="RNAct" id="Q06336">
    <property type="molecule type" value="protein"/>
</dbReference>
<dbReference type="GO" id="GO:0005829">
    <property type="term" value="C:cytosol"/>
    <property type="evidence" value="ECO:0007005"/>
    <property type="project" value="SGD"/>
</dbReference>
<dbReference type="GO" id="GO:0005802">
    <property type="term" value="C:trans-Golgi network"/>
    <property type="evidence" value="ECO:0000314"/>
    <property type="project" value="SGD"/>
</dbReference>
<dbReference type="GO" id="GO:0035091">
    <property type="term" value="F:phosphatidylinositol binding"/>
    <property type="evidence" value="ECO:0007669"/>
    <property type="project" value="InterPro"/>
</dbReference>
<dbReference type="GO" id="GO:0043130">
    <property type="term" value="F:ubiquitin binding"/>
    <property type="evidence" value="ECO:0000314"/>
    <property type="project" value="SGD"/>
</dbReference>
<dbReference type="GO" id="GO:0006895">
    <property type="term" value="P:Golgi to endosome transport"/>
    <property type="evidence" value="ECO:0000315"/>
    <property type="project" value="SGD"/>
</dbReference>
<dbReference type="GO" id="GO:0006896">
    <property type="term" value="P:Golgi to vacuole transport"/>
    <property type="evidence" value="ECO:0000315"/>
    <property type="project" value="SGD"/>
</dbReference>
<dbReference type="GO" id="GO:0043328">
    <property type="term" value="P:protein transport to vacuole involved in ubiquitin-dependent protein catabolic process via the multivesicular body sorting pathway"/>
    <property type="evidence" value="ECO:0000315"/>
    <property type="project" value="SGD"/>
</dbReference>
<dbReference type="CDD" id="cd14235">
    <property type="entry name" value="GAT_GGA_fungi"/>
    <property type="match status" value="1"/>
</dbReference>
<dbReference type="CDD" id="cd16998">
    <property type="entry name" value="VHS_GGA_fungi"/>
    <property type="match status" value="1"/>
</dbReference>
<dbReference type="FunFam" id="1.20.58.160:FF:000003">
    <property type="entry name" value="VHS domain protein"/>
    <property type="match status" value="1"/>
</dbReference>
<dbReference type="FunFam" id="1.25.40.90:FF:000008">
    <property type="entry name" value="VHS domain protein"/>
    <property type="match status" value="1"/>
</dbReference>
<dbReference type="Gene3D" id="1.20.5.170">
    <property type="match status" value="1"/>
</dbReference>
<dbReference type="Gene3D" id="1.20.58.160">
    <property type="match status" value="1"/>
</dbReference>
<dbReference type="Gene3D" id="1.25.40.90">
    <property type="match status" value="1"/>
</dbReference>
<dbReference type="Gene3D" id="2.60.40.1230">
    <property type="match status" value="1"/>
</dbReference>
<dbReference type="InterPro" id="IPR052653">
    <property type="entry name" value="ARF-binding"/>
</dbReference>
<dbReference type="InterPro" id="IPR008152">
    <property type="entry name" value="Clathrin_a/b/g-adaptin_app_Ig"/>
</dbReference>
<dbReference type="InterPro" id="IPR013041">
    <property type="entry name" value="Clathrin_app_Ig-like_sf"/>
</dbReference>
<dbReference type="InterPro" id="IPR008942">
    <property type="entry name" value="ENTH_VHS"/>
</dbReference>
<dbReference type="InterPro" id="IPR008153">
    <property type="entry name" value="GAE_dom"/>
</dbReference>
<dbReference type="InterPro" id="IPR004152">
    <property type="entry name" value="GAT_dom"/>
</dbReference>
<dbReference type="InterPro" id="IPR038425">
    <property type="entry name" value="GAT_sf"/>
</dbReference>
<dbReference type="InterPro" id="IPR041198">
    <property type="entry name" value="GGA_N-GAT"/>
</dbReference>
<dbReference type="InterPro" id="IPR002014">
    <property type="entry name" value="VHS_dom"/>
</dbReference>
<dbReference type="PANTHER" id="PTHR47180">
    <property type="entry name" value="ADP-RIBOSYLATION FACTOR-BINDING PROTEIN GGA1-RELATED"/>
    <property type="match status" value="1"/>
</dbReference>
<dbReference type="PANTHER" id="PTHR47180:SF1">
    <property type="entry name" value="ADP-RIBOSYLATION FACTOR-BINDING PROTEIN GGA1-RELATED"/>
    <property type="match status" value="1"/>
</dbReference>
<dbReference type="Pfam" id="PF02883">
    <property type="entry name" value="Alpha_adaptinC2"/>
    <property type="match status" value="1"/>
</dbReference>
<dbReference type="Pfam" id="PF03127">
    <property type="entry name" value="GAT"/>
    <property type="match status" value="1"/>
</dbReference>
<dbReference type="Pfam" id="PF18308">
    <property type="entry name" value="GGA_N-GAT"/>
    <property type="match status" value="1"/>
</dbReference>
<dbReference type="Pfam" id="PF00790">
    <property type="entry name" value="VHS"/>
    <property type="match status" value="1"/>
</dbReference>
<dbReference type="SMART" id="SM00809">
    <property type="entry name" value="Alpha_adaptinC2"/>
    <property type="match status" value="1"/>
</dbReference>
<dbReference type="SMART" id="SM00288">
    <property type="entry name" value="VHS"/>
    <property type="match status" value="1"/>
</dbReference>
<dbReference type="SUPFAM" id="SSF49348">
    <property type="entry name" value="Clathrin adaptor appendage domain"/>
    <property type="match status" value="1"/>
</dbReference>
<dbReference type="SUPFAM" id="SSF48464">
    <property type="entry name" value="ENTH/VHS domain"/>
    <property type="match status" value="1"/>
</dbReference>
<dbReference type="SUPFAM" id="SSF89009">
    <property type="entry name" value="GAT-like domain"/>
    <property type="match status" value="1"/>
</dbReference>
<dbReference type="PROSITE" id="PS50180">
    <property type="entry name" value="GAE"/>
    <property type="match status" value="1"/>
</dbReference>
<dbReference type="PROSITE" id="PS50909">
    <property type="entry name" value="GAT"/>
    <property type="match status" value="1"/>
</dbReference>
<dbReference type="PROSITE" id="PS50179">
    <property type="entry name" value="VHS"/>
    <property type="match status" value="1"/>
</dbReference>
<comment type="function">
    <text>May play a role in the regulation of membrane traffic through the trans-Golgi network.</text>
</comment>
<comment type="subunit">
    <text>Binds to ARF1 and ARF2.</text>
</comment>
<comment type="subcellular location">
    <subcellularLocation>
        <location>Golgi apparatus</location>
        <location>trans-Golgi network</location>
    </subcellularLocation>
</comment>
<comment type="miscellaneous">
    <text evidence="4">Present with 656 molecules/cell in log phase SD medium.</text>
</comment>
<feature type="chain" id="PRO_0000212686" description="ADP-ribosylation factor-binding protein GGA1">
    <location>
        <begin position="1"/>
        <end position="557"/>
    </location>
</feature>
<feature type="domain" description="VHS" evidence="2">
    <location>
        <begin position="29"/>
        <end position="165"/>
    </location>
</feature>
<feature type="domain" description="GAT" evidence="3">
    <location>
        <begin position="192"/>
        <end position="317"/>
    </location>
</feature>
<feature type="domain" description="GAE" evidence="1">
    <location>
        <begin position="440"/>
        <end position="556"/>
    </location>
</feature>
<feature type="modified residue" description="Phosphothreonine" evidence="5">
    <location>
        <position position="348"/>
    </location>
</feature>
<feature type="modified residue" description="Phosphoserine" evidence="7">
    <location>
        <position position="353"/>
    </location>
</feature>
<feature type="modified residue" description="Phosphoserine" evidence="5 7">
    <location>
        <position position="357"/>
    </location>
</feature>
<feature type="modified residue" description="Phosphoserine" evidence="5 6 7">
    <location>
        <position position="378"/>
    </location>
</feature>
<feature type="modified residue" description="Phosphoserine" evidence="6">
    <location>
        <position position="394"/>
    </location>
</feature>
<feature type="strand" evidence="8">
    <location>
        <begin position="445"/>
        <end position="449"/>
    </location>
</feature>
<feature type="strand" evidence="8">
    <location>
        <begin position="451"/>
        <end position="461"/>
    </location>
</feature>
<feature type="strand" evidence="8">
    <location>
        <begin position="463"/>
        <end position="475"/>
    </location>
</feature>
<feature type="strand" evidence="8">
    <location>
        <begin position="477"/>
        <end position="479"/>
    </location>
</feature>
<feature type="strand" evidence="8">
    <location>
        <begin position="481"/>
        <end position="488"/>
    </location>
</feature>
<feature type="strand" evidence="8">
    <location>
        <begin position="495"/>
        <end position="498"/>
    </location>
</feature>
<feature type="strand" evidence="8">
    <location>
        <begin position="510"/>
        <end position="522"/>
    </location>
</feature>
<feature type="helix" evidence="8">
    <location>
        <begin position="523"/>
        <end position="526"/>
    </location>
</feature>
<feature type="strand" evidence="8">
    <location>
        <begin position="531"/>
        <end position="541"/>
    </location>
</feature>
<feature type="strand" evidence="8">
    <location>
        <begin position="544"/>
        <end position="554"/>
    </location>
</feature>
<reference key="1">
    <citation type="journal article" date="1997" name="Nature">
        <title>The nucleotide sequence of Saccharomyces cerevisiae chromosome IV.</title>
        <authorList>
            <person name="Jacq C."/>
            <person name="Alt-Moerbe J."/>
            <person name="Andre B."/>
            <person name="Arnold W."/>
            <person name="Bahr A."/>
            <person name="Ballesta J.P.G."/>
            <person name="Bargues M."/>
            <person name="Baron L."/>
            <person name="Becker A."/>
            <person name="Biteau N."/>
            <person name="Bloecker H."/>
            <person name="Blugeon C."/>
            <person name="Boskovic J."/>
            <person name="Brandt P."/>
            <person name="Brueckner M."/>
            <person name="Buitrago M.J."/>
            <person name="Coster F."/>
            <person name="Delaveau T."/>
            <person name="del Rey F."/>
            <person name="Dujon B."/>
            <person name="Eide L.G."/>
            <person name="Garcia-Cantalejo J.M."/>
            <person name="Goffeau A."/>
            <person name="Gomez-Peris A."/>
            <person name="Granotier C."/>
            <person name="Hanemann V."/>
            <person name="Hankeln T."/>
            <person name="Hoheisel J.D."/>
            <person name="Jaeger W."/>
            <person name="Jimenez A."/>
            <person name="Jonniaux J.-L."/>
            <person name="Kraemer C."/>
            <person name="Kuester H."/>
            <person name="Laamanen P."/>
            <person name="Legros Y."/>
            <person name="Louis E.J."/>
            <person name="Moeller-Rieker S."/>
            <person name="Monnet A."/>
            <person name="Moro M."/>
            <person name="Mueller-Auer S."/>
            <person name="Nussbaumer B."/>
            <person name="Paricio N."/>
            <person name="Paulin L."/>
            <person name="Perea J."/>
            <person name="Perez-Alonso M."/>
            <person name="Perez-Ortin J.E."/>
            <person name="Pohl T.M."/>
            <person name="Prydz H."/>
            <person name="Purnelle B."/>
            <person name="Rasmussen S.W."/>
            <person name="Remacha M.A."/>
            <person name="Revuelta J.L."/>
            <person name="Rieger M."/>
            <person name="Salom D."/>
            <person name="Saluz H.P."/>
            <person name="Saiz J.E."/>
            <person name="Saren A.-M."/>
            <person name="Schaefer M."/>
            <person name="Scharfe M."/>
            <person name="Schmidt E.R."/>
            <person name="Schneider C."/>
            <person name="Scholler P."/>
            <person name="Schwarz S."/>
            <person name="Soler-Mira A."/>
            <person name="Urrestarazu L.A."/>
            <person name="Verhasselt P."/>
            <person name="Vissers S."/>
            <person name="Voet M."/>
            <person name="Volckaert G."/>
            <person name="Wagner G."/>
            <person name="Wambutt R."/>
            <person name="Wedler E."/>
            <person name="Wedler H."/>
            <person name="Woelfl S."/>
            <person name="Harris D.E."/>
            <person name="Bowman S."/>
            <person name="Brown D."/>
            <person name="Churcher C.M."/>
            <person name="Connor R."/>
            <person name="Dedman K."/>
            <person name="Gentles S."/>
            <person name="Hamlin N."/>
            <person name="Hunt S."/>
            <person name="Jones L."/>
            <person name="McDonald S."/>
            <person name="Murphy L.D."/>
            <person name="Niblett D."/>
            <person name="Odell C."/>
            <person name="Oliver K."/>
            <person name="Rajandream M.A."/>
            <person name="Richards C."/>
            <person name="Shore L."/>
            <person name="Walsh S.V."/>
            <person name="Barrell B.G."/>
            <person name="Dietrich F.S."/>
            <person name="Mulligan J.T."/>
            <person name="Allen E."/>
            <person name="Araujo R."/>
            <person name="Aviles E."/>
            <person name="Berno A."/>
            <person name="Carpenter J."/>
            <person name="Chen E."/>
            <person name="Cherry J.M."/>
            <person name="Chung E."/>
            <person name="Duncan M."/>
            <person name="Hunicke-Smith S."/>
            <person name="Hyman R.W."/>
            <person name="Komp C."/>
            <person name="Lashkari D."/>
            <person name="Lew H."/>
            <person name="Lin D."/>
            <person name="Mosedale D."/>
            <person name="Nakahara K."/>
            <person name="Namath A."/>
            <person name="Oefner P."/>
            <person name="Oh C."/>
            <person name="Petel F.X."/>
            <person name="Roberts D."/>
            <person name="Schramm S."/>
            <person name="Schroeder M."/>
            <person name="Shogren T."/>
            <person name="Shroff N."/>
            <person name="Winant A."/>
            <person name="Yelton M.A."/>
            <person name="Botstein D."/>
            <person name="Davis R.W."/>
            <person name="Johnston M."/>
            <person name="Andrews S."/>
            <person name="Brinkman R."/>
            <person name="Cooper J."/>
            <person name="Ding H."/>
            <person name="Du Z."/>
            <person name="Favello A."/>
            <person name="Fulton L."/>
            <person name="Gattung S."/>
            <person name="Greco T."/>
            <person name="Hallsworth K."/>
            <person name="Hawkins J."/>
            <person name="Hillier L.W."/>
            <person name="Jier M."/>
            <person name="Johnson D."/>
            <person name="Johnston L."/>
            <person name="Kirsten J."/>
            <person name="Kucaba T."/>
            <person name="Langston Y."/>
            <person name="Latreille P."/>
            <person name="Le T."/>
            <person name="Mardis E."/>
            <person name="Menezes S."/>
            <person name="Miller N."/>
            <person name="Nhan M."/>
            <person name="Pauley A."/>
            <person name="Peluso D."/>
            <person name="Rifkin L."/>
            <person name="Riles L."/>
            <person name="Taich A."/>
            <person name="Trevaskis E."/>
            <person name="Vignati D."/>
            <person name="Wilcox L."/>
            <person name="Wohldman P."/>
            <person name="Vaudin M."/>
            <person name="Wilson R."/>
            <person name="Waterston R."/>
            <person name="Albermann K."/>
            <person name="Hani J."/>
            <person name="Heumann K."/>
            <person name="Kleine K."/>
            <person name="Mewes H.-W."/>
            <person name="Zollner A."/>
            <person name="Zaccaria P."/>
        </authorList>
    </citation>
    <scope>NUCLEOTIDE SEQUENCE [LARGE SCALE GENOMIC DNA]</scope>
    <source>
        <strain>ATCC 204508 / S288c</strain>
    </source>
</reference>
<reference key="2">
    <citation type="journal article" date="2014" name="G3 (Bethesda)">
        <title>The reference genome sequence of Saccharomyces cerevisiae: Then and now.</title>
        <authorList>
            <person name="Engel S.R."/>
            <person name="Dietrich F.S."/>
            <person name="Fisk D.G."/>
            <person name="Binkley G."/>
            <person name="Balakrishnan R."/>
            <person name="Costanzo M.C."/>
            <person name="Dwight S.S."/>
            <person name="Hitz B.C."/>
            <person name="Karra K."/>
            <person name="Nash R.S."/>
            <person name="Weng S."/>
            <person name="Wong E.D."/>
            <person name="Lloyd P."/>
            <person name="Skrzypek M.S."/>
            <person name="Miyasato S.R."/>
            <person name="Simison M."/>
            <person name="Cherry J.M."/>
        </authorList>
    </citation>
    <scope>GENOME REANNOTATION</scope>
    <source>
        <strain>ATCC 204508 / S288c</strain>
    </source>
</reference>
<reference key="3">
    <citation type="journal article" date="2000" name="J. Cell Biol.">
        <title>A family of proteins with gamma-adaptin and VHS domains that facilitate trafficking between the trans-Golgi network and the vacuole/lysosome.</title>
        <authorList>
            <person name="Hirst J."/>
            <person name="Lui W.W.Y."/>
            <person name="Bright N.A."/>
            <person name="Totty N."/>
            <person name="Seaman M.N.J."/>
            <person name="Robinson M.S."/>
        </authorList>
    </citation>
    <scope>CHARACTERIZATION</scope>
</reference>
<reference key="4">
    <citation type="journal article" date="2001" name="Yeast">
        <title>Yeast GGA proteins interact with GTP-bound Arf and facilitate transport through the Golgi.</title>
        <authorList>
            <person name="Zhdankina O."/>
            <person name="Strand N.L."/>
            <person name="Redmond J.M."/>
            <person name="Boman A.L."/>
        </authorList>
    </citation>
    <scope>CHARACTERIZATION</scope>
</reference>
<reference key="5">
    <citation type="journal article" date="2003" name="Nature">
        <title>Global analysis of protein expression in yeast.</title>
        <authorList>
            <person name="Ghaemmaghami S."/>
            <person name="Huh W.-K."/>
            <person name="Bower K."/>
            <person name="Howson R.W."/>
            <person name="Belle A."/>
            <person name="Dephoure N."/>
            <person name="O'Shea E.K."/>
            <person name="Weissman J.S."/>
        </authorList>
    </citation>
    <scope>LEVEL OF PROTEIN EXPRESSION [LARGE SCALE ANALYSIS]</scope>
</reference>
<reference key="6">
    <citation type="journal article" date="2005" name="Mol. Cell. Proteomics">
        <title>Quantitative phosphoproteomics applied to the yeast pheromone signaling pathway.</title>
        <authorList>
            <person name="Gruhler A."/>
            <person name="Olsen J.V."/>
            <person name="Mohammed S."/>
            <person name="Mortensen P."/>
            <person name="Faergeman N.J."/>
            <person name="Mann M."/>
            <person name="Jensen O.N."/>
        </authorList>
    </citation>
    <scope>IDENTIFICATION BY MASS SPECTROMETRY [LARGE SCALE ANALYSIS]</scope>
    <source>
        <strain>YAL6B</strain>
    </source>
</reference>
<reference key="7">
    <citation type="journal article" date="2007" name="J. Proteome Res.">
        <title>Large-scale phosphorylation analysis of alpha-factor-arrested Saccharomyces cerevisiae.</title>
        <authorList>
            <person name="Li X."/>
            <person name="Gerber S.A."/>
            <person name="Rudner A.D."/>
            <person name="Beausoleil S.A."/>
            <person name="Haas W."/>
            <person name="Villen J."/>
            <person name="Elias J.E."/>
            <person name="Gygi S.P."/>
        </authorList>
    </citation>
    <scope>PHOSPHORYLATION [LARGE SCALE ANALYSIS] AT THR-348; SER-357 AND SER-378</scope>
    <scope>IDENTIFICATION BY MASS SPECTROMETRY [LARGE SCALE ANALYSIS]</scope>
    <source>
        <strain>ADR376</strain>
    </source>
</reference>
<reference key="8">
    <citation type="journal article" date="2008" name="Mol. Cell. Proteomics">
        <title>A multidimensional chromatography technology for in-depth phosphoproteome analysis.</title>
        <authorList>
            <person name="Albuquerque C.P."/>
            <person name="Smolka M.B."/>
            <person name="Payne S.H."/>
            <person name="Bafna V."/>
            <person name="Eng J."/>
            <person name="Zhou H."/>
        </authorList>
    </citation>
    <scope>PHOSPHORYLATION [LARGE SCALE ANALYSIS] AT SER-378 AND SER-394</scope>
    <scope>IDENTIFICATION BY MASS SPECTROMETRY [LARGE SCALE ANALYSIS]</scope>
</reference>
<reference key="9">
    <citation type="journal article" date="2009" name="Science">
        <title>Global analysis of Cdk1 substrate phosphorylation sites provides insights into evolution.</title>
        <authorList>
            <person name="Holt L.J."/>
            <person name="Tuch B.B."/>
            <person name="Villen J."/>
            <person name="Johnson A.D."/>
            <person name="Gygi S.P."/>
            <person name="Morgan D.O."/>
        </authorList>
    </citation>
    <scope>PHOSPHORYLATION [LARGE SCALE ANALYSIS] AT SER-353; SER-357 AND SER-378</scope>
    <scope>IDENTIFICATION BY MASS SPECTROMETRY [LARGE SCALE ANALYSIS]</scope>
</reference>
<protein>
    <recommendedName>
        <fullName>ADP-ribosylation factor-binding protein GGA1</fullName>
    </recommendedName>
    <alternativeName>
        <fullName>Golgi-localized, gamma ear-containing, ARF-binding protein 1</fullName>
    </alternativeName>
</protein>
<gene>
    <name type="primary">GGA1</name>
    <name type="ordered locus">YDR358W</name>
    <name type="ORF">D9476.2</name>
</gene>
<name>GGA1_YEAST</name>
<proteinExistence type="evidence at protein level"/>